<dbReference type="EC" id="6.5.1.2" evidence="1"/>
<dbReference type="EMBL" id="CP000776">
    <property type="protein sequence ID" value="ABS51677.1"/>
    <property type="molecule type" value="Genomic_DNA"/>
</dbReference>
<dbReference type="RefSeq" id="WP_012108874.1">
    <property type="nucleotide sequence ID" value="NC_009714.1"/>
</dbReference>
<dbReference type="SMR" id="A7I236"/>
<dbReference type="STRING" id="360107.CHAB381_1017"/>
<dbReference type="KEGG" id="cha:CHAB381_1017"/>
<dbReference type="eggNOG" id="COG0272">
    <property type="taxonomic scope" value="Bacteria"/>
</dbReference>
<dbReference type="HOGENOM" id="CLU_007764_2_1_7"/>
<dbReference type="OrthoDB" id="9759736at2"/>
<dbReference type="Proteomes" id="UP000002407">
    <property type="component" value="Chromosome"/>
</dbReference>
<dbReference type="GO" id="GO:0005829">
    <property type="term" value="C:cytosol"/>
    <property type="evidence" value="ECO:0007669"/>
    <property type="project" value="TreeGrafter"/>
</dbReference>
<dbReference type="GO" id="GO:0003677">
    <property type="term" value="F:DNA binding"/>
    <property type="evidence" value="ECO:0007669"/>
    <property type="project" value="InterPro"/>
</dbReference>
<dbReference type="GO" id="GO:0003911">
    <property type="term" value="F:DNA ligase (NAD+) activity"/>
    <property type="evidence" value="ECO:0007669"/>
    <property type="project" value="UniProtKB-UniRule"/>
</dbReference>
<dbReference type="GO" id="GO:0046872">
    <property type="term" value="F:metal ion binding"/>
    <property type="evidence" value="ECO:0007669"/>
    <property type="project" value="UniProtKB-KW"/>
</dbReference>
<dbReference type="GO" id="GO:0006281">
    <property type="term" value="P:DNA repair"/>
    <property type="evidence" value="ECO:0007669"/>
    <property type="project" value="UniProtKB-KW"/>
</dbReference>
<dbReference type="GO" id="GO:0006260">
    <property type="term" value="P:DNA replication"/>
    <property type="evidence" value="ECO:0007669"/>
    <property type="project" value="UniProtKB-KW"/>
</dbReference>
<dbReference type="CDD" id="cd17748">
    <property type="entry name" value="BRCT_DNA_ligase_like"/>
    <property type="match status" value="1"/>
</dbReference>
<dbReference type="CDD" id="cd00114">
    <property type="entry name" value="LIGANc"/>
    <property type="match status" value="1"/>
</dbReference>
<dbReference type="FunFam" id="1.10.150.20:FF:000007">
    <property type="entry name" value="DNA ligase"/>
    <property type="match status" value="1"/>
</dbReference>
<dbReference type="FunFam" id="2.40.50.140:FF:000012">
    <property type="entry name" value="DNA ligase"/>
    <property type="match status" value="1"/>
</dbReference>
<dbReference type="Gene3D" id="1.10.150.20">
    <property type="entry name" value="5' to 3' exonuclease, C-terminal subdomain"/>
    <property type="match status" value="2"/>
</dbReference>
<dbReference type="Gene3D" id="3.40.50.10190">
    <property type="entry name" value="BRCT domain"/>
    <property type="match status" value="1"/>
</dbReference>
<dbReference type="Gene3D" id="3.30.470.30">
    <property type="entry name" value="DNA ligase/mRNA capping enzyme"/>
    <property type="match status" value="1"/>
</dbReference>
<dbReference type="Gene3D" id="1.10.287.610">
    <property type="entry name" value="Helix hairpin bin"/>
    <property type="match status" value="1"/>
</dbReference>
<dbReference type="Gene3D" id="2.40.50.140">
    <property type="entry name" value="Nucleic acid-binding proteins"/>
    <property type="match status" value="1"/>
</dbReference>
<dbReference type="HAMAP" id="MF_01588">
    <property type="entry name" value="DNA_ligase_A"/>
    <property type="match status" value="1"/>
</dbReference>
<dbReference type="InterPro" id="IPR001357">
    <property type="entry name" value="BRCT_dom"/>
</dbReference>
<dbReference type="InterPro" id="IPR036420">
    <property type="entry name" value="BRCT_dom_sf"/>
</dbReference>
<dbReference type="InterPro" id="IPR041663">
    <property type="entry name" value="DisA/LigA_HHH"/>
</dbReference>
<dbReference type="InterPro" id="IPR001679">
    <property type="entry name" value="DNA_ligase"/>
</dbReference>
<dbReference type="InterPro" id="IPR018239">
    <property type="entry name" value="DNA_ligase_AS"/>
</dbReference>
<dbReference type="InterPro" id="IPR033136">
    <property type="entry name" value="DNA_ligase_CS"/>
</dbReference>
<dbReference type="InterPro" id="IPR013839">
    <property type="entry name" value="DNAligase_adenylation"/>
</dbReference>
<dbReference type="InterPro" id="IPR013840">
    <property type="entry name" value="DNAligase_N"/>
</dbReference>
<dbReference type="InterPro" id="IPR003583">
    <property type="entry name" value="Hlx-hairpin-Hlx_DNA-bd_motif"/>
</dbReference>
<dbReference type="InterPro" id="IPR012340">
    <property type="entry name" value="NA-bd_OB-fold"/>
</dbReference>
<dbReference type="InterPro" id="IPR004150">
    <property type="entry name" value="NAD_DNA_ligase_OB"/>
</dbReference>
<dbReference type="InterPro" id="IPR010994">
    <property type="entry name" value="RuvA_2-like"/>
</dbReference>
<dbReference type="NCBIfam" id="TIGR00575">
    <property type="entry name" value="dnlj"/>
    <property type="match status" value="1"/>
</dbReference>
<dbReference type="NCBIfam" id="NF005932">
    <property type="entry name" value="PRK07956.1"/>
    <property type="match status" value="1"/>
</dbReference>
<dbReference type="PANTHER" id="PTHR23389">
    <property type="entry name" value="CHROMOSOME TRANSMISSION FIDELITY FACTOR 18"/>
    <property type="match status" value="1"/>
</dbReference>
<dbReference type="PANTHER" id="PTHR23389:SF9">
    <property type="entry name" value="DNA LIGASE"/>
    <property type="match status" value="1"/>
</dbReference>
<dbReference type="Pfam" id="PF00533">
    <property type="entry name" value="BRCT"/>
    <property type="match status" value="1"/>
</dbReference>
<dbReference type="Pfam" id="PF01653">
    <property type="entry name" value="DNA_ligase_aden"/>
    <property type="match status" value="1"/>
</dbReference>
<dbReference type="Pfam" id="PF03120">
    <property type="entry name" value="DNA_ligase_OB"/>
    <property type="match status" value="1"/>
</dbReference>
<dbReference type="Pfam" id="PF12826">
    <property type="entry name" value="HHH_2"/>
    <property type="match status" value="1"/>
</dbReference>
<dbReference type="PIRSF" id="PIRSF001604">
    <property type="entry name" value="LigA"/>
    <property type="match status" value="1"/>
</dbReference>
<dbReference type="SMART" id="SM00292">
    <property type="entry name" value="BRCT"/>
    <property type="match status" value="1"/>
</dbReference>
<dbReference type="SMART" id="SM00278">
    <property type="entry name" value="HhH1"/>
    <property type="match status" value="4"/>
</dbReference>
<dbReference type="SMART" id="SM00532">
    <property type="entry name" value="LIGANc"/>
    <property type="match status" value="1"/>
</dbReference>
<dbReference type="SUPFAM" id="SSF52113">
    <property type="entry name" value="BRCT domain"/>
    <property type="match status" value="1"/>
</dbReference>
<dbReference type="SUPFAM" id="SSF56091">
    <property type="entry name" value="DNA ligase/mRNA capping enzyme, catalytic domain"/>
    <property type="match status" value="1"/>
</dbReference>
<dbReference type="SUPFAM" id="SSF50249">
    <property type="entry name" value="Nucleic acid-binding proteins"/>
    <property type="match status" value="1"/>
</dbReference>
<dbReference type="SUPFAM" id="SSF47781">
    <property type="entry name" value="RuvA domain 2-like"/>
    <property type="match status" value="1"/>
</dbReference>
<dbReference type="PROSITE" id="PS50172">
    <property type="entry name" value="BRCT"/>
    <property type="match status" value="1"/>
</dbReference>
<dbReference type="PROSITE" id="PS01055">
    <property type="entry name" value="DNA_LIGASE_N1"/>
    <property type="match status" value="1"/>
</dbReference>
<dbReference type="PROSITE" id="PS01056">
    <property type="entry name" value="DNA_LIGASE_N2"/>
    <property type="match status" value="1"/>
</dbReference>
<accession>A7I236</accession>
<sequence length="645" mass="72444">MSEAEYLKAVEMLNIWAKAYYTQDNPLATDIEYDVLYKKVETFENEFPDLKVSYSPTNRVGDAVSEGFEKINHKAKMWSMEDIFDDNELLAWLERGEKAGLEFFVEPKFDGASLNLTYENGVLISAGTRGNGETGENVTQNVKVINSIPLQIDYKEKIEIRGEVVIAKSDFDALNDERANSGENLFANPRNAAAGSLRQLDSAVVKSRHLKFFPWDVGENSLNFKKHSEIMEFVRNLGFLKDDFVRVCASLTDLRKAYVDLHEMRERKDILMDGMVIRINELTKCENMGYTIKFPRFMVAYKFPPVEKATKLIDINLQVGRTGVITPVGVLEPVNIDGATVRNATLHNFDEIARLGLMKGDIVSIIRSGDVIPKITGVFGARRNGSETPIKRPEFCPVCGSRLLVEDIFIRCQNLTCKARIVNSLIYFCSKKCMNIDGLGEAIINTLFEKGKIINISDIYTLKADDLEGLEGFKDKKISNLLASIENSRISPLYRFITALGIEHIGEVAARKIAEIFGENWLNASFDEILKIDGFGEAMAKSFVGFCEINREKIENLLSFLHLSAQKTEISQNVFTKKTVVITGTLSISRDEMKEKLIKMGANVTNSVSKKTDFVLFGKDAGSKLEKAKMLGVKAISEDEFKEML</sequence>
<comment type="function">
    <text evidence="1">DNA ligase that catalyzes the formation of phosphodiester linkages between 5'-phosphoryl and 3'-hydroxyl groups in double-stranded DNA using NAD as a coenzyme and as the energy source for the reaction. It is essential for DNA replication and repair of damaged DNA.</text>
</comment>
<comment type="catalytic activity">
    <reaction evidence="1">
        <text>NAD(+) + (deoxyribonucleotide)n-3'-hydroxyl + 5'-phospho-(deoxyribonucleotide)m = (deoxyribonucleotide)n+m + AMP + beta-nicotinamide D-nucleotide.</text>
        <dbReference type="EC" id="6.5.1.2"/>
    </reaction>
</comment>
<comment type="cofactor">
    <cofactor evidence="1">
        <name>Mg(2+)</name>
        <dbReference type="ChEBI" id="CHEBI:18420"/>
    </cofactor>
    <cofactor evidence="1">
        <name>Mn(2+)</name>
        <dbReference type="ChEBI" id="CHEBI:29035"/>
    </cofactor>
</comment>
<comment type="similarity">
    <text evidence="1">Belongs to the NAD-dependent DNA ligase family. LigA subfamily.</text>
</comment>
<evidence type="ECO:0000255" key="1">
    <source>
        <dbReference type="HAMAP-Rule" id="MF_01588"/>
    </source>
</evidence>
<gene>
    <name evidence="1" type="primary">ligA</name>
    <name type="ordered locus">CHAB381_1017</name>
</gene>
<keyword id="KW-0227">DNA damage</keyword>
<keyword id="KW-0234">DNA repair</keyword>
<keyword id="KW-0235">DNA replication</keyword>
<keyword id="KW-0436">Ligase</keyword>
<keyword id="KW-0460">Magnesium</keyword>
<keyword id="KW-0464">Manganese</keyword>
<keyword id="KW-0479">Metal-binding</keyword>
<keyword id="KW-0520">NAD</keyword>
<keyword id="KW-1185">Reference proteome</keyword>
<keyword id="KW-0862">Zinc</keyword>
<organism>
    <name type="scientific">Campylobacter hominis (strain ATCC BAA-381 / DSM 21671 / CCUG 45161 / LMG 19568 / NCTC 13146 / CH001A)</name>
    <dbReference type="NCBI Taxonomy" id="360107"/>
    <lineage>
        <taxon>Bacteria</taxon>
        <taxon>Pseudomonadati</taxon>
        <taxon>Campylobacterota</taxon>
        <taxon>Epsilonproteobacteria</taxon>
        <taxon>Campylobacterales</taxon>
        <taxon>Campylobacteraceae</taxon>
        <taxon>Campylobacter</taxon>
    </lineage>
</organism>
<feature type="chain" id="PRO_0000313175" description="DNA ligase">
    <location>
        <begin position="1"/>
        <end position="645"/>
    </location>
</feature>
<feature type="domain" description="BRCT" evidence="1">
    <location>
        <begin position="570"/>
        <end position="645"/>
    </location>
</feature>
<feature type="active site" description="N6-AMP-lysine intermediate" evidence="1">
    <location>
        <position position="108"/>
    </location>
</feature>
<feature type="binding site" evidence="1">
    <location>
        <begin position="30"/>
        <end position="34"/>
    </location>
    <ligand>
        <name>NAD(+)</name>
        <dbReference type="ChEBI" id="CHEBI:57540"/>
    </ligand>
</feature>
<feature type="binding site" evidence="1">
    <location>
        <begin position="79"/>
        <end position="80"/>
    </location>
    <ligand>
        <name>NAD(+)</name>
        <dbReference type="ChEBI" id="CHEBI:57540"/>
    </ligand>
</feature>
<feature type="binding site" evidence="1">
    <location>
        <position position="106"/>
    </location>
    <ligand>
        <name>NAD(+)</name>
        <dbReference type="ChEBI" id="CHEBI:57540"/>
    </ligand>
</feature>
<feature type="binding site" evidence="1">
    <location>
        <position position="129"/>
    </location>
    <ligand>
        <name>NAD(+)</name>
        <dbReference type="ChEBI" id="CHEBI:57540"/>
    </ligand>
</feature>
<feature type="binding site" evidence="1">
    <location>
        <position position="163"/>
    </location>
    <ligand>
        <name>NAD(+)</name>
        <dbReference type="ChEBI" id="CHEBI:57540"/>
    </ligand>
</feature>
<feature type="binding site" evidence="1">
    <location>
        <position position="302"/>
    </location>
    <ligand>
        <name>NAD(+)</name>
        <dbReference type="ChEBI" id="CHEBI:57540"/>
    </ligand>
</feature>
<feature type="binding site" evidence="1">
    <location>
        <position position="396"/>
    </location>
    <ligand>
        <name>Zn(2+)</name>
        <dbReference type="ChEBI" id="CHEBI:29105"/>
    </ligand>
</feature>
<feature type="binding site" evidence="1">
    <location>
        <position position="399"/>
    </location>
    <ligand>
        <name>Zn(2+)</name>
        <dbReference type="ChEBI" id="CHEBI:29105"/>
    </ligand>
</feature>
<feature type="binding site" evidence="1">
    <location>
        <position position="412"/>
    </location>
    <ligand>
        <name>Zn(2+)</name>
        <dbReference type="ChEBI" id="CHEBI:29105"/>
    </ligand>
</feature>
<feature type="binding site" evidence="1">
    <location>
        <position position="417"/>
    </location>
    <ligand>
        <name>Zn(2+)</name>
        <dbReference type="ChEBI" id="CHEBI:29105"/>
    </ligand>
</feature>
<reference key="1">
    <citation type="submission" date="2007-07" db="EMBL/GenBank/DDBJ databases">
        <title>Complete genome sequence of Campylobacter hominis ATCC BAA-381, a commensal isolated from the human gastrointestinal tract.</title>
        <authorList>
            <person name="Fouts D.E."/>
            <person name="Mongodin E.F."/>
            <person name="Puiu D."/>
            <person name="Sebastian Y."/>
            <person name="Miller W.G."/>
            <person name="Mandrell R.E."/>
            <person name="Nelson K.E."/>
        </authorList>
    </citation>
    <scope>NUCLEOTIDE SEQUENCE [LARGE SCALE GENOMIC DNA]</scope>
    <source>
        <strain>ATCC BAA-381 / DSM 21671 / CCUG 45161 / LMG 19568 / NCTC 13146 / CH001A</strain>
    </source>
</reference>
<proteinExistence type="inferred from homology"/>
<name>DNLJ_CAMHC</name>
<protein>
    <recommendedName>
        <fullName evidence="1">DNA ligase</fullName>
        <ecNumber evidence="1">6.5.1.2</ecNumber>
    </recommendedName>
    <alternativeName>
        <fullName evidence="1">Polydeoxyribonucleotide synthase [NAD(+)]</fullName>
    </alternativeName>
</protein>